<organism>
    <name type="scientific">Methanococcus vannielii (strain ATCC 35089 / DSM 1224 / JCM 13029 / OCM 148 / SB)</name>
    <dbReference type="NCBI Taxonomy" id="406327"/>
    <lineage>
        <taxon>Archaea</taxon>
        <taxon>Methanobacteriati</taxon>
        <taxon>Methanobacteriota</taxon>
        <taxon>Methanomada group</taxon>
        <taxon>Methanococci</taxon>
        <taxon>Methanococcales</taxon>
        <taxon>Methanococcaceae</taxon>
        <taxon>Methanococcus</taxon>
    </lineage>
</organism>
<sequence>MSGSKSPKGEFAGRKLLLKRKATRWQHYKYVNRELGLKVKADPLGGAPMGRGIVVEKVGLEAKQPNSAIRKCVKVQLIKNGRVVTAFAPGNHAINFIDEHDEVVIEGIGGPSGQAKGDIPGVRYKVLMVGKNSIRELVRGRQEKVKR</sequence>
<keyword id="KW-0687">Ribonucleoprotein</keyword>
<keyword id="KW-0689">Ribosomal protein</keyword>
<keyword id="KW-0694">RNA-binding</keyword>
<keyword id="KW-0699">rRNA-binding</keyword>
<comment type="function">
    <text evidence="1">With S4 and S5 plays an important role in translational accuracy. Located at the interface of the 30S and 50S subunits.</text>
</comment>
<comment type="subunit">
    <text>Part of the 30S ribosomal subunit.</text>
</comment>
<comment type="similarity">
    <text evidence="1">Belongs to the universal ribosomal protein uS12 family.</text>
</comment>
<accession>P14040</accession>
<accession>A6UQ11</accession>
<reference key="1">
    <citation type="journal article" date="1989" name="J. Mol. Evol.">
        <title>Organization and nucleotide sequence of a transcriptional unit of Methanococcus vannielii comprising genes for protein synthesis elongation factors and ribosomal proteins.</title>
        <authorList>
            <person name="Lechner K."/>
            <person name="Heller G."/>
            <person name="Boeck A."/>
        </authorList>
    </citation>
    <scope>NUCLEOTIDE SEQUENCE [GENOMIC DNA]</scope>
</reference>
<reference key="2">
    <citation type="submission" date="2007-06" db="EMBL/GenBank/DDBJ databases">
        <title>Complete sequence of Methanococcus vannielii SB.</title>
        <authorList>
            <consortium name="US DOE Joint Genome Institute"/>
            <person name="Copeland A."/>
            <person name="Lucas S."/>
            <person name="Lapidus A."/>
            <person name="Barry K."/>
            <person name="Glavina del Rio T."/>
            <person name="Dalin E."/>
            <person name="Tice H."/>
            <person name="Pitluck S."/>
            <person name="Chain P."/>
            <person name="Malfatti S."/>
            <person name="Shin M."/>
            <person name="Vergez L."/>
            <person name="Schmutz J."/>
            <person name="Larimer F."/>
            <person name="Land M."/>
            <person name="Hauser L."/>
            <person name="Kyrpides N."/>
            <person name="Anderson I."/>
            <person name="Sieprawska-Lupa M."/>
            <person name="Whitman W.B."/>
            <person name="Richardson P."/>
        </authorList>
    </citation>
    <scope>NUCLEOTIDE SEQUENCE [LARGE SCALE GENOMIC DNA]</scope>
    <source>
        <strain>ATCC 35089 / DSM 1224 / JCM 13029 / OCM 148 / SB</strain>
    </source>
</reference>
<proteinExistence type="inferred from homology"/>
<gene>
    <name evidence="1" type="primary">rps12</name>
    <name type="ordered locus">Mevan_0677</name>
</gene>
<name>RS12_METVS</name>
<protein>
    <recommendedName>
        <fullName evidence="1">Small ribosomal subunit protein uS12</fullName>
    </recommendedName>
    <alternativeName>
        <fullName evidence="2">30S ribosomal protein S12</fullName>
    </alternativeName>
</protein>
<dbReference type="EMBL" id="X15970">
    <property type="protein sequence ID" value="CAA34089.1"/>
    <property type="molecule type" value="Genomic_DNA"/>
</dbReference>
<dbReference type="EMBL" id="CP000742">
    <property type="protein sequence ID" value="ABR54583.1"/>
    <property type="molecule type" value="Genomic_DNA"/>
</dbReference>
<dbReference type="PIR" id="S06623">
    <property type="entry name" value="R3MX12"/>
</dbReference>
<dbReference type="RefSeq" id="WP_011972485.1">
    <property type="nucleotide sequence ID" value="NC_009634.1"/>
</dbReference>
<dbReference type="SMR" id="P14040"/>
<dbReference type="STRING" id="406327.Mevan_0677"/>
<dbReference type="GeneID" id="5325046"/>
<dbReference type="KEGG" id="mvn:Mevan_0677"/>
<dbReference type="eggNOG" id="arCOG04255">
    <property type="taxonomic scope" value="Archaea"/>
</dbReference>
<dbReference type="HOGENOM" id="CLU_115574_0_1_2"/>
<dbReference type="OrthoDB" id="45154at2157"/>
<dbReference type="Proteomes" id="UP000001107">
    <property type="component" value="Chromosome"/>
</dbReference>
<dbReference type="GO" id="GO:0015935">
    <property type="term" value="C:small ribosomal subunit"/>
    <property type="evidence" value="ECO:0007669"/>
    <property type="project" value="InterPro"/>
</dbReference>
<dbReference type="GO" id="GO:0019843">
    <property type="term" value="F:rRNA binding"/>
    <property type="evidence" value="ECO:0007669"/>
    <property type="project" value="UniProtKB-UniRule"/>
</dbReference>
<dbReference type="GO" id="GO:0003735">
    <property type="term" value="F:structural constituent of ribosome"/>
    <property type="evidence" value="ECO:0007669"/>
    <property type="project" value="InterPro"/>
</dbReference>
<dbReference type="GO" id="GO:0006412">
    <property type="term" value="P:translation"/>
    <property type="evidence" value="ECO:0007669"/>
    <property type="project" value="UniProtKB-UniRule"/>
</dbReference>
<dbReference type="CDD" id="cd03367">
    <property type="entry name" value="Ribosomal_S23"/>
    <property type="match status" value="1"/>
</dbReference>
<dbReference type="FunFam" id="2.40.50.140:FF:000007">
    <property type="entry name" value="40S ribosomal protein S23"/>
    <property type="match status" value="1"/>
</dbReference>
<dbReference type="Gene3D" id="2.40.50.140">
    <property type="entry name" value="Nucleic acid-binding proteins"/>
    <property type="match status" value="1"/>
</dbReference>
<dbReference type="HAMAP" id="MF_00403_A">
    <property type="entry name" value="Ribosomal_uS12_A"/>
    <property type="match status" value="1"/>
</dbReference>
<dbReference type="InterPro" id="IPR012340">
    <property type="entry name" value="NA-bd_OB-fold"/>
</dbReference>
<dbReference type="InterPro" id="IPR006032">
    <property type="entry name" value="Ribosomal_uS12"/>
</dbReference>
<dbReference type="InterPro" id="IPR022863">
    <property type="entry name" value="Ribosomal_uS12_arc"/>
</dbReference>
<dbReference type="InterPro" id="IPR005680">
    <property type="entry name" value="Ribosomal_uS12_euk/arc"/>
</dbReference>
<dbReference type="NCBIfam" id="NF003254">
    <property type="entry name" value="PRK04211.1"/>
    <property type="match status" value="1"/>
</dbReference>
<dbReference type="NCBIfam" id="TIGR00982">
    <property type="entry name" value="uS12_E_A"/>
    <property type="match status" value="1"/>
</dbReference>
<dbReference type="PANTHER" id="PTHR11652">
    <property type="entry name" value="30S RIBOSOMAL PROTEIN S12 FAMILY MEMBER"/>
    <property type="match status" value="1"/>
</dbReference>
<dbReference type="Pfam" id="PF00164">
    <property type="entry name" value="Ribosom_S12_S23"/>
    <property type="match status" value="1"/>
</dbReference>
<dbReference type="PIRSF" id="PIRSF002133">
    <property type="entry name" value="Ribosomal_S12/S23"/>
    <property type="match status" value="1"/>
</dbReference>
<dbReference type="SUPFAM" id="SSF50249">
    <property type="entry name" value="Nucleic acid-binding proteins"/>
    <property type="match status" value="1"/>
</dbReference>
<dbReference type="PROSITE" id="PS00055">
    <property type="entry name" value="RIBOSOMAL_S12"/>
    <property type="match status" value="1"/>
</dbReference>
<evidence type="ECO:0000255" key="1">
    <source>
        <dbReference type="HAMAP-Rule" id="MF_00403"/>
    </source>
</evidence>
<evidence type="ECO:0000305" key="2"/>
<feature type="chain" id="PRO_0000146373" description="Small ribosomal subunit protein uS12">
    <location>
        <begin position="1"/>
        <end position="147"/>
    </location>
</feature>